<evidence type="ECO:0000250" key="1">
    <source>
        <dbReference type="UniProtKB" id="O94903"/>
    </source>
</evidence>
<evidence type="ECO:0000250" key="2">
    <source>
        <dbReference type="UniProtKB" id="Q9Z2Y8"/>
    </source>
</evidence>
<evidence type="ECO:0000255" key="3">
    <source>
        <dbReference type="HAMAP-Rule" id="MF_03225"/>
    </source>
</evidence>
<comment type="function">
    <text evidence="3">Pyridoxal 5'-phosphate (PLP)-binding protein, which may be involved in intracellular homeostatic regulation of pyridoxal 5'-phosphate (PLP), the active form of vitamin B6.</text>
</comment>
<comment type="similarity">
    <text evidence="3">Belongs to the pyridoxal phosphate-binding protein YggS/PROSC family.</text>
</comment>
<reference key="1">
    <citation type="submission" date="2004-11" db="EMBL/GenBank/DDBJ databases">
        <authorList>
            <consortium name="The German cDNA consortium"/>
        </authorList>
    </citation>
    <scope>NUCLEOTIDE SEQUENCE [LARGE SCALE MRNA]</scope>
    <source>
        <tissue>Brain cortex</tissue>
    </source>
</reference>
<keyword id="KW-0597">Phosphoprotein</keyword>
<keyword id="KW-0663">Pyridoxal phosphate</keyword>
<keyword id="KW-1185">Reference proteome</keyword>
<dbReference type="EMBL" id="CR861096">
    <property type="protein sequence ID" value="CAH93175.1"/>
    <property type="molecule type" value="mRNA"/>
</dbReference>
<dbReference type="RefSeq" id="NP_001126869.1">
    <property type="nucleotide sequence ID" value="NM_001133397.1"/>
</dbReference>
<dbReference type="SMR" id="Q5R4Z1"/>
<dbReference type="STRING" id="9601.ENSPPYP00000020750"/>
<dbReference type="GeneID" id="100173881"/>
<dbReference type="KEGG" id="pon:100173881"/>
<dbReference type="CTD" id="11212"/>
<dbReference type="eggNOG" id="KOG3157">
    <property type="taxonomic scope" value="Eukaryota"/>
</dbReference>
<dbReference type="InParanoid" id="Q5R4Z1"/>
<dbReference type="OrthoDB" id="10264196at2759"/>
<dbReference type="Proteomes" id="UP000001595">
    <property type="component" value="Unplaced"/>
</dbReference>
<dbReference type="GO" id="GO:0030170">
    <property type="term" value="F:pyridoxal phosphate binding"/>
    <property type="evidence" value="ECO:0007669"/>
    <property type="project" value="UniProtKB-UniRule"/>
</dbReference>
<dbReference type="CDD" id="cd06822">
    <property type="entry name" value="PLPDE_III_YBL036c_euk"/>
    <property type="match status" value="1"/>
</dbReference>
<dbReference type="FunFam" id="3.20.20.10:FF:000007">
    <property type="entry name" value="Pyridoxal phosphate homeostasis protein"/>
    <property type="match status" value="1"/>
</dbReference>
<dbReference type="Gene3D" id="3.20.20.10">
    <property type="entry name" value="Alanine racemase"/>
    <property type="match status" value="1"/>
</dbReference>
<dbReference type="HAMAP" id="MF_02087">
    <property type="entry name" value="PLP_homeostasis"/>
    <property type="match status" value="1"/>
</dbReference>
<dbReference type="InterPro" id="IPR001608">
    <property type="entry name" value="Ala_racemase_N"/>
</dbReference>
<dbReference type="InterPro" id="IPR029066">
    <property type="entry name" value="PLP-binding_barrel"/>
</dbReference>
<dbReference type="InterPro" id="IPR011078">
    <property type="entry name" value="PyrdxlP_homeostasis"/>
</dbReference>
<dbReference type="NCBIfam" id="TIGR00044">
    <property type="entry name" value="YggS family pyridoxal phosphate-dependent enzyme"/>
    <property type="match status" value="1"/>
</dbReference>
<dbReference type="PANTHER" id="PTHR10146">
    <property type="entry name" value="PROLINE SYNTHETASE CO-TRANSCRIBED BACTERIAL HOMOLOG PROTEIN"/>
    <property type="match status" value="1"/>
</dbReference>
<dbReference type="PANTHER" id="PTHR10146:SF14">
    <property type="entry name" value="PYRIDOXAL PHOSPHATE HOMEOSTASIS PROTEIN"/>
    <property type="match status" value="1"/>
</dbReference>
<dbReference type="Pfam" id="PF01168">
    <property type="entry name" value="Ala_racemase_N"/>
    <property type="match status" value="1"/>
</dbReference>
<dbReference type="PIRSF" id="PIRSF004848">
    <property type="entry name" value="YBL036c_PLPDEIII"/>
    <property type="match status" value="1"/>
</dbReference>
<dbReference type="SUPFAM" id="SSF51419">
    <property type="entry name" value="PLP-binding barrel"/>
    <property type="match status" value="1"/>
</dbReference>
<dbReference type="PROSITE" id="PS01211">
    <property type="entry name" value="UPF0001"/>
    <property type="match status" value="1"/>
</dbReference>
<protein>
    <recommendedName>
        <fullName evidence="3">Pyridoxal phosphate homeostasis protein</fullName>
        <shortName evidence="3">PLP homeostasis protein</shortName>
    </recommendedName>
    <alternativeName>
        <fullName evidence="3">Proline synthase co-transcribed bacterial homolog protein</fullName>
    </alternativeName>
    <alternativeName>
        <fullName evidence="1">Pyridoxal phosphate-binding protein</fullName>
    </alternativeName>
</protein>
<name>PLPHP_PONAB</name>
<proteinExistence type="evidence at transcript level"/>
<gene>
    <name evidence="3" type="primary">PLPBP</name>
    <name evidence="3" type="synonym">PROSC</name>
</gene>
<organism>
    <name type="scientific">Pongo abelii</name>
    <name type="common">Sumatran orangutan</name>
    <name type="synonym">Pongo pygmaeus abelii</name>
    <dbReference type="NCBI Taxonomy" id="9601"/>
    <lineage>
        <taxon>Eukaryota</taxon>
        <taxon>Metazoa</taxon>
        <taxon>Chordata</taxon>
        <taxon>Craniata</taxon>
        <taxon>Vertebrata</taxon>
        <taxon>Euteleostomi</taxon>
        <taxon>Mammalia</taxon>
        <taxon>Eutheria</taxon>
        <taxon>Euarchontoglires</taxon>
        <taxon>Primates</taxon>
        <taxon>Haplorrhini</taxon>
        <taxon>Catarrhini</taxon>
        <taxon>Hominidae</taxon>
        <taxon>Pongo</taxon>
    </lineage>
</organism>
<sequence>MWRAGSMSAELGVGCALRAVNERVQQAVALRPRDLPAIQPRLVAVSKTKPADMVIEAYGHGQRTFGENYVQELLEKASNPKILSLGPEIKWHFIGHLQKQNVNKLMAVPNLFVLETVDSVKLAGKVNSSWQKKGSPERLKVMVQINTSGEESKHGLPPSETIAIVEHINAKCPNLEFVGLMTIGSFGHDLSQGPNPDFQLLLSLREELCKKLNIPADQVELSMGMSVDFQHAIEVGSTNVRIGSMIFGERDYSKKPAPDKCAADVKAPLEVAQEH</sequence>
<feature type="chain" id="PRO_0000249597" description="Pyridoxal phosphate homeostasis protein">
    <location>
        <begin position="1"/>
        <end position="275"/>
    </location>
</feature>
<feature type="modified residue" description="Phosphoserine" evidence="1">
    <location>
        <position position="6"/>
    </location>
</feature>
<feature type="modified residue" description="N6-(pyridoxal phosphate)lysine" evidence="3">
    <location>
        <position position="47"/>
    </location>
</feature>
<feature type="modified residue" description="Phosphotyrosine" evidence="2">
    <location>
        <position position="69"/>
    </location>
</feature>
<feature type="modified residue" description="N6-succinyllysine" evidence="2">
    <location>
        <position position="125"/>
    </location>
</feature>
<feature type="modified residue" description="Phosphoserine" evidence="1">
    <location>
        <position position="226"/>
    </location>
</feature>
<feature type="modified residue" description="Phosphoserine" evidence="1">
    <location>
        <position position="244"/>
    </location>
</feature>
<accession>Q5R4Z1</accession>